<keyword id="KW-0963">Cytoplasm</keyword>
<keyword id="KW-0903">Direct protein sequencing</keyword>
<keyword id="KW-0324">Glycolysis</keyword>
<keyword id="KW-0520">NAD</keyword>
<keyword id="KW-0547">Nucleotide-binding</keyword>
<keyword id="KW-0560">Oxidoreductase</keyword>
<accession>Q5XDW3</accession>
<proteinExistence type="evidence at protein level"/>
<protein>
    <recommendedName>
        <fullName evidence="1">Glyceraldehyde-3-phosphate dehydrogenase</fullName>
        <shortName evidence="1">GAPDH</shortName>
        <ecNumber evidence="2">1.2.1.12</ecNumber>
    </recommendedName>
    <alternativeName>
        <fullName evidence="1">NAD-dependent glyceraldehyde-3-phosphate dehydrogenase</fullName>
    </alternativeName>
</protein>
<feature type="initiator methionine" description="Removed" evidence="4">
    <location>
        <position position="1"/>
    </location>
</feature>
<feature type="chain" id="PRO_0000145706" description="Glyceraldehyde-3-phosphate dehydrogenase">
    <location>
        <begin position="2"/>
        <end position="336"/>
    </location>
</feature>
<feature type="active site" description="Nucleophile" evidence="1">
    <location>
        <position position="152"/>
    </location>
</feature>
<feature type="binding site" evidence="1">
    <location>
        <begin position="12"/>
        <end position="13"/>
    </location>
    <ligand>
        <name>NAD(+)</name>
        <dbReference type="ChEBI" id="CHEBI:57540"/>
    </ligand>
</feature>
<feature type="binding site" evidence="1">
    <location>
        <position position="34"/>
    </location>
    <ligand>
        <name>NAD(+)</name>
        <dbReference type="ChEBI" id="CHEBI:57540"/>
    </ligand>
</feature>
<feature type="binding site" evidence="1">
    <location>
        <position position="78"/>
    </location>
    <ligand>
        <name>NAD(+)</name>
        <dbReference type="ChEBI" id="CHEBI:57540"/>
    </ligand>
</feature>
<feature type="binding site" evidence="1">
    <location>
        <position position="121"/>
    </location>
    <ligand>
        <name>NAD(+)</name>
        <dbReference type="ChEBI" id="CHEBI:57540"/>
    </ligand>
</feature>
<feature type="binding site" evidence="1">
    <location>
        <begin position="151"/>
        <end position="153"/>
    </location>
    <ligand>
        <name>D-glyceraldehyde 3-phosphate</name>
        <dbReference type="ChEBI" id="CHEBI:59776"/>
    </ligand>
</feature>
<feature type="binding site" evidence="1">
    <location>
        <position position="182"/>
    </location>
    <ligand>
        <name>D-glyceraldehyde 3-phosphate</name>
        <dbReference type="ChEBI" id="CHEBI:59776"/>
    </ligand>
</feature>
<feature type="binding site" evidence="1">
    <location>
        <position position="199"/>
    </location>
    <ligand>
        <name>D-glyceraldehyde 3-phosphate</name>
        <dbReference type="ChEBI" id="CHEBI:59776"/>
    </ligand>
</feature>
<feature type="binding site" evidence="1">
    <location>
        <begin position="212"/>
        <end position="213"/>
    </location>
    <ligand>
        <name>D-glyceraldehyde 3-phosphate</name>
        <dbReference type="ChEBI" id="CHEBI:59776"/>
    </ligand>
</feature>
<feature type="binding site" evidence="1">
    <location>
        <position position="235"/>
    </location>
    <ligand>
        <name>D-glyceraldehyde 3-phosphate</name>
        <dbReference type="ChEBI" id="CHEBI:59776"/>
    </ligand>
</feature>
<feature type="binding site" evidence="1">
    <location>
        <position position="316"/>
    </location>
    <ligand>
        <name>NAD(+)</name>
        <dbReference type="ChEBI" id="CHEBI:57540"/>
    </ligand>
</feature>
<feature type="site" description="Activates thiol group during catalysis" evidence="3">
    <location>
        <position position="179"/>
    </location>
</feature>
<reference key="1">
    <citation type="journal article" date="2004" name="J. Infect. Dis.">
        <title>Progress toward characterization of the group A Streptococcus metagenome: complete genome sequence of a macrolide-resistant serotype M6 strain.</title>
        <authorList>
            <person name="Banks D.J."/>
            <person name="Porcella S.F."/>
            <person name="Barbian K.D."/>
            <person name="Beres S.B."/>
            <person name="Philips L.E."/>
            <person name="Voyich J.M."/>
            <person name="DeLeo F.R."/>
            <person name="Martin J.M."/>
            <person name="Somerville G.A."/>
            <person name="Musser J.M."/>
        </authorList>
    </citation>
    <scope>NUCLEOTIDE SEQUENCE [LARGE SCALE GENOMIC DNA]</scope>
    <source>
        <strain>ATCC BAA-946 / MGAS10394</strain>
    </source>
</reference>
<reference key="2">
    <citation type="submission" date="2000-05" db="UniProtKB">
        <title>Two-dimensional gel electrophoresis map of Streptococcus pyogenes proteins.</title>
        <authorList>
            <person name="Hogan D.A."/>
            <person name="Du P."/>
            <person name="Stevenson T.I."/>
            <person name="Whitton M."/>
            <person name="Kilby G.W."/>
            <person name="Rogers J."/>
            <person name="VanBogelen R.A."/>
        </authorList>
    </citation>
    <scope>PROTEIN SEQUENCE OF 2-12; 21-31; 104-129; 163-172 AND 200-216</scope>
    <source>
        <strain>JRS4 / Serotype M6</strain>
    </source>
</reference>
<name>G3P_STRP6</name>
<dbReference type="EC" id="1.2.1.12" evidence="2"/>
<dbReference type="EMBL" id="CP000003">
    <property type="protein sequence ID" value="AAT86400.1"/>
    <property type="status" value="ALT_INIT"/>
    <property type="molecule type" value="Genomic_DNA"/>
</dbReference>
<dbReference type="RefSeq" id="WP_002986042.1">
    <property type="nucleotide sequence ID" value="NC_006086.1"/>
</dbReference>
<dbReference type="SMR" id="Q5XDW3"/>
<dbReference type="KEGG" id="spa:M6_Spy0265"/>
<dbReference type="HOGENOM" id="CLU_030140_0_0_9"/>
<dbReference type="UniPathway" id="UPA00109">
    <property type="reaction ID" value="UER00184"/>
</dbReference>
<dbReference type="Proteomes" id="UP000001167">
    <property type="component" value="Chromosome"/>
</dbReference>
<dbReference type="GO" id="GO:0005737">
    <property type="term" value="C:cytoplasm"/>
    <property type="evidence" value="ECO:0007669"/>
    <property type="project" value="UniProtKB-SubCell"/>
</dbReference>
<dbReference type="GO" id="GO:0004365">
    <property type="term" value="F:glyceraldehyde-3-phosphate dehydrogenase (NAD+) (phosphorylating) activity"/>
    <property type="evidence" value="ECO:0000250"/>
    <property type="project" value="UniProtKB"/>
</dbReference>
<dbReference type="GO" id="GO:0051287">
    <property type="term" value="F:NAD binding"/>
    <property type="evidence" value="ECO:0000250"/>
    <property type="project" value="UniProtKB"/>
</dbReference>
<dbReference type="GO" id="GO:0050661">
    <property type="term" value="F:NADP binding"/>
    <property type="evidence" value="ECO:0007669"/>
    <property type="project" value="InterPro"/>
</dbReference>
<dbReference type="GO" id="GO:0006006">
    <property type="term" value="P:glucose metabolic process"/>
    <property type="evidence" value="ECO:0007669"/>
    <property type="project" value="InterPro"/>
</dbReference>
<dbReference type="GO" id="GO:0006096">
    <property type="term" value="P:glycolytic process"/>
    <property type="evidence" value="ECO:0007669"/>
    <property type="project" value="UniProtKB-UniPathway"/>
</dbReference>
<dbReference type="CDD" id="cd18126">
    <property type="entry name" value="GAPDH_I_C"/>
    <property type="match status" value="1"/>
</dbReference>
<dbReference type="CDD" id="cd05214">
    <property type="entry name" value="GAPDH_I_N"/>
    <property type="match status" value="1"/>
</dbReference>
<dbReference type="FunFam" id="3.30.360.10:FF:000002">
    <property type="entry name" value="Glyceraldehyde-3-phosphate dehydrogenase"/>
    <property type="match status" value="1"/>
</dbReference>
<dbReference type="FunFam" id="3.40.50.720:FF:000001">
    <property type="entry name" value="Glyceraldehyde-3-phosphate dehydrogenase"/>
    <property type="match status" value="1"/>
</dbReference>
<dbReference type="Gene3D" id="3.30.360.10">
    <property type="entry name" value="Dihydrodipicolinate Reductase, domain 2"/>
    <property type="match status" value="1"/>
</dbReference>
<dbReference type="Gene3D" id="3.40.50.720">
    <property type="entry name" value="NAD(P)-binding Rossmann-like Domain"/>
    <property type="match status" value="1"/>
</dbReference>
<dbReference type="InterPro" id="IPR020831">
    <property type="entry name" value="GlycerAld/Erythrose_P_DH"/>
</dbReference>
<dbReference type="InterPro" id="IPR020830">
    <property type="entry name" value="GlycerAld_3-P_DH_AS"/>
</dbReference>
<dbReference type="InterPro" id="IPR020829">
    <property type="entry name" value="GlycerAld_3-P_DH_cat"/>
</dbReference>
<dbReference type="InterPro" id="IPR020828">
    <property type="entry name" value="GlycerAld_3-P_DH_NAD(P)-bd"/>
</dbReference>
<dbReference type="InterPro" id="IPR006424">
    <property type="entry name" value="Glyceraldehyde-3-P_DH_1"/>
</dbReference>
<dbReference type="InterPro" id="IPR036291">
    <property type="entry name" value="NAD(P)-bd_dom_sf"/>
</dbReference>
<dbReference type="NCBIfam" id="TIGR01534">
    <property type="entry name" value="GAPDH-I"/>
    <property type="match status" value="1"/>
</dbReference>
<dbReference type="PANTHER" id="PTHR43148">
    <property type="entry name" value="GLYCERALDEHYDE-3-PHOSPHATE DEHYDROGENASE 2"/>
    <property type="match status" value="1"/>
</dbReference>
<dbReference type="Pfam" id="PF02800">
    <property type="entry name" value="Gp_dh_C"/>
    <property type="match status" value="1"/>
</dbReference>
<dbReference type="Pfam" id="PF00044">
    <property type="entry name" value="Gp_dh_N"/>
    <property type="match status" value="1"/>
</dbReference>
<dbReference type="PIRSF" id="PIRSF000149">
    <property type="entry name" value="GAP_DH"/>
    <property type="match status" value="1"/>
</dbReference>
<dbReference type="PRINTS" id="PR00078">
    <property type="entry name" value="G3PDHDRGNASE"/>
</dbReference>
<dbReference type="SMART" id="SM00846">
    <property type="entry name" value="Gp_dh_N"/>
    <property type="match status" value="1"/>
</dbReference>
<dbReference type="SUPFAM" id="SSF55347">
    <property type="entry name" value="Glyceraldehyde-3-phosphate dehydrogenase-like, C-terminal domain"/>
    <property type="match status" value="1"/>
</dbReference>
<dbReference type="SUPFAM" id="SSF51735">
    <property type="entry name" value="NAD(P)-binding Rossmann-fold domains"/>
    <property type="match status" value="1"/>
</dbReference>
<dbReference type="PROSITE" id="PS00071">
    <property type="entry name" value="GAPDH"/>
    <property type="match status" value="1"/>
</dbReference>
<organism>
    <name type="scientific">Streptococcus pyogenes serotype M6 (strain ATCC BAA-946 / MGAS10394)</name>
    <dbReference type="NCBI Taxonomy" id="286636"/>
    <lineage>
        <taxon>Bacteria</taxon>
        <taxon>Bacillati</taxon>
        <taxon>Bacillota</taxon>
        <taxon>Bacilli</taxon>
        <taxon>Lactobacillales</taxon>
        <taxon>Streptococcaceae</taxon>
        <taxon>Streptococcus</taxon>
    </lineage>
</organism>
<gene>
    <name type="primary">gap</name>
    <name type="synonym">gapA</name>
    <name type="synonym">plr</name>
    <name type="ordered locus">M6_Spy0265</name>
</gene>
<sequence length="336" mass="35943">MVVKVGINGFGRIGRLAFRRIQNIEGVEVTRINDLTDPNMLAHLLKYDTTQGRFDGTVEVKEGGFEVNGNFIKVSAERDPENIDWATDGVEIVLEATGFFAKKEAAEKHLHANGAKKVVITAPGGNDVKTVVFNTNHDILDGTETVISGASCTTNCLAPMAKALHDAFGIQKGLMTTIHAYTGDQMILDGPHRGGDLRRARAGAANIVPNSTGAAKAIGLVIPELNGKLDGAAQRVPVPTGSVTELVVTLDKNVSVDEINAAMKAASNDSFGYTEDPIVSSDIVGVSYGSLFDATQTKVMEVDGSQLVKVVSWYDNEMSYTAQLVRTLEYFAKIAK</sequence>
<evidence type="ECO:0000250" key="1">
    <source>
        <dbReference type="UniProtKB" id="P00362"/>
    </source>
</evidence>
<evidence type="ECO:0000250" key="2">
    <source>
        <dbReference type="UniProtKB" id="P09124"/>
    </source>
</evidence>
<evidence type="ECO:0000250" key="3">
    <source>
        <dbReference type="UniProtKB" id="Q6GIL8"/>
    </source>
</evidence>
<evidence type="ECO:0000269" key="4">
    <source ref="2"/>
</evidence>
<evidence type="ECO:0000305" key="5"/>
<comment type="function">
    <text evidence="1">Catalyzes the oxidative phosphorylation of glyceraldehyde 3-phosphate (G3P) to 1,3-bisphosphoglycerate (BPG) using the cofactor NAD. The first reaction step involves the formation of a hemiacetal intermediate between G3P and a cysteine residue, and this hemiacetal intermediate is then oxidized to a thioester, with concomitant reduction of NAD to NADH. The reduced NADH is then exchanged with the second NAD, and the thioester is attacked by a nucleophilic inorganic phosphate to produce BPG.</text>
</comment>
<comment type="catalytic activity">
    <reaction evidence="2">
        <text>D-glyceraldehyde 3-phosphate + phosphate + NAD(+) = (2R)-3-phospho-glyceroyl phosphate + NADH + H(+)</text>
        <dbReference type="Rhea" id="RHEA:10300"/>
        <dbReference type="ChEBI" id="CHEBI:15378"/>
        <dbReference type="ChEBI" id="CHEBI:43474"/>
        <dbReference type="ChEBI" id="CHEBI:57540"/>
        <dbReference type="ChEBI" id="CHEBI:57604"/>
        <dbReference type="ChEBI" id="CHEBI:57945"/>
        <dbReference type="ChEBI" id="CHEBI:59776"/>
        <dbReference type="EC" id="1.2.1.12"/>
    </reaction>
</comment>
<comment type="pathway">
    <text evidence="5">Carbohydrate degradation; glycolysis; pyruvate from D-glyceraldehyde 3-phosphate: step 1/5.</text>
</comment>
<comment type="subunit">
    <text evidence="1">Homotetramer.</text>
</comment>
<comment type="subcellular location">
    <subcellularLocation>
        <location evidence="5">Cytoplasm</location>
    </subcellularLocation>
</comment>
<comment type="similarity">
    <text evidence="5">Belongs to the glyceraldehyde-3-phosphate dehydrogenase family.</text>
</comment>
<comment type="sequence caution" evidence="5">
    <conflict type="erroneous initiation">
        <sequence resource="EMBL-CDS" id="AAT86400"/>
    </conflict>
    <text>Extended N-terminus.</text>
</comment>